<evidence type="ECO:0000255" key="1">
    <source>
        <dbReference type="HAMAP-Rule" id="MF_00815"/>
    </source>
</evidence>
<gene>
    <name evidence="1" type="primary">atpG</name>
    <name type="ordered locus">Emin_1521</name>
</gene>
<sequence>MESLKDIRDNIKSVQSTQQVMVTMKMISSARIKKAQNAMLNARPFSLGLEGVIDDLRKDILDENNSFKDPDLSKFFKKPDMEKKNIGVLFITADKGLAGAFNALLLRAALNFIKENQDKNIYFFIIGKKGRDFLSRLKQPNVHIVYDAVGIFPKVGYVHADILGEEIINNFLKLDLCEVRVLYNDFKSMGSQKLENQRLIPFDFEIAQGHTEFGEEEHGFLFEPGKEMIFKLLLYRHIKAGLYRILLESQAAELAARMNAMDSASKNAGEIIDTLKVKLNKVRQSSITNEITEIVGAVEALNK</sequence>
<keyword id="KW-0066">ATP synthesis</keyword>
<keyword id="KW-0997">Cell inner membrane</keyword>
<keyword id="KW-1003">Cell membrane</keyword>
<keyword id="KW-0139">CF(1)</keyword>
<keyword id="KW-0375">Hydrogen ion transport</keyword>
<keyword id="KW-0406">Ion transport</keyword>
<keyword id="KW-0472">Membrane</keyword>
<keyword id="KW-1185">Reference proteome</keyword>
<keyword id="KW-0813">Transport</keyword>
<organism>
    <name type="scientific">Elusimicrobium minutum (strain Pei191)</name>
    <dbReference type="NCBI Taxonomy" id="445932"/>
    <lineage>
        <taxon>Bacteria</taxon>
        <taxon>Pseudomonadati</taxon>
        <taxon>Elusimicrobiota</taxon>
        <taxon>Elusimicrobia</taxon>
        <taxon>Elusimicrobiales</taxon>
        <taxon>Elusimicrobiaceae</taxon>
        <taxon>Elusimicrobium</taxon>
    </lineage>
</organism>
<name>ATPG_ELUMP</name>
<protein>
    <recommendedName>
        <fullName evidence="1">ATP synthase gamma chain</fullName>
    </recommendedName>
    <alternativeName>
        <fullName evidence="1">ATP synthase F1 sector gamma subunit</fullName>
    </alternativeName>
    <alternativeName>
        <fullName evidence="1">F-ATPase gamma subunit</fullName>
    </alternativeName>
</protein>
<proteinExistence type="inferred from homology"/>
<dbReference type="EMBL" id="CP001055">
    <property type="protein sequence ID" value="ACC99068.1"/>
    <property type="molecule type" value="Genomic_DNA"/>
</dbReference>
<dbReference type="RefSeq" id="WP_012415682.1">
    <property type="nucleotide sequence ID" value="NC_010644.1"/>
</dbReference>
<dbReference type="SMR" id="B2KEX2"/>
<dbReference type="STRING" id="445932.Emin_1521"/>
<dbReference type="KEGG" id="emi:Emin_1521"/>
<dbReference type="HOGENOM" id="CLU_050669_0_1_0"/>
<dbReference type="OrthoDB" id="9812769at2"/>
<dbReference type="Proteomes" id="UP000001029">
    <property type="component" value="Chromosome"/>
</dbReference>
<dbReference type="GO" id="GO:0005886">
    <property type="term" value="C:plasma membrane"/>
    <property type="evidence" value="ECO:0007669"/>
    <property type="project" value="UniProtKB-SubCell"/>
</dbReference>
<dbReference type="GO" id="GO:0045259">
    <property type="term" value="C:proton-transporting ATP synthase complex"/>
    <property type="evidence" value="ECO:0007669"/>
    <property type="project" value="UniProtKB-KW"/>
</dbReference>
<dbReference type="GO" id="GO:0005524">
    <property type="term" value="F:ATP binding"/>
    <property type="evidence" value="ECO:0007669"/>
    <property type="project" value="UniProtKB-UniRule"/>
</dbReference>
<dbReference type="GO" id="GO:0046933">
    <property type="term" value="F:proton-transporting ATP synthase activity, rotational mechanism"/>
    <property type="evidence" value="ECO:0007669"/>
    <property type="project" value="UniProtKB-UniRule"/>
</dbReference>
<dbReference type="GO" id="GO:0042777">
    <property type="term" value="P:proton motive force-driven plasma membrane ATP synthesis"/>
    <property type="evidence" value="ECO:0007669"/>
    <property type="project" value="UniProtKB-UniRule"/>
</dbReference>
<dbReference type="CDD" id="cd12151">
    <property type="entry name" value="F1-ATPase_gamma"/>
    <property type="match status" value="1"/>
</dbReference>
<dbReference type="Gene3D" id="3.40.1380.10">
    <property type="match status" value="1"/>
</dbReference>
<dbReference type="Gene3D" id="1.10.287.80">
    <property type="entry name" value="ATP synthase, gamma subunit, helix hairpin domain"/>
    <property type="match status" value="2"/>
</dbReference>
<dbReference type="HAMAP" id="MF_00815">
    <property type="entry name" value="ATP_synth_gamma_bact"/>
    <property type="match status" value="1"/>
</dbReference>
<dbReference type="InterPro" id="IPR035968">
    <property type="entry name" value="ATP_synth_F1_ATPase_gsu"/>
</dbReference>
<dbReference type="InterPro" id="IPR000131">
    <property type="entry name" value="ATP_synth_F1_gsu"/>
</dbReference>
<dbReference type="NCBIfam" id="TIGR01146">
    <property type="entry name" value="ATPsyn_F1gamma"/>
    <property type="match status" value="1"/>
</dbReference>
<dbReference type="PANTHER" id="PTHR11693">
    <property type="entry name" value="ATP SYNTHASE GAMMA CHAIN"/>
    <property type="match status" value="1"/>
</dbReference>
<dbReference type="PANTHER" id="PTHR11693:SF22">
    <property type="entry name" value="ATP SYNTHASE SUBUNIT GAMMA, MITOCHONDRIAL"/>
    <property type="match status" value="1"/>
</dbReference>
<dbReference type="Pfam" id="PF00231">
    <property type="entry name" value="ATP-synt"/>
    <property type="match status" value="1"/>
</dbReference>
<dbReference type="PRINTS" id="PR00126">
    <property type="entry name" value="ATPASEGAMMA"/>
</dbReference>
<dbReference type="SUPFAM" id="SSF52943">
    <property type="entry name" value="ATP synthase (F1-ATPase), gamma subunit"/>
    <property type="match status" value="1"/>
</dbReference>
<feature type="chain" id="PRO_1000134150" description="ATP synthase gamma chain">
    <location>
        <begin position="1"/>
        <end position="303"/>
    </location>
</feature>
<reference key="1">
    <citation type="journal article" date="2009" name="Appl. Environ. Microbiol.">
        <title>Genomic analysis of 'Elusimicrobium minutum,' the first cultivated representative of the phylum 'Elusimicrobia' (formerly termite group 1).</title>
        <authorList>
            <person name="Herlemann D.P.R."/>
            <person name="Geissinger O."/>
            <person name="Ikeda-Ohtsubo W."/>
            <person name="Kunin V."/>
            <person name="Sun H."/>
            <person name="Lapidus A."/>
            <person name="Hugenholtz P."/>
            <person name="Brune A."/>
        </authorList>
    </citation>
    <scope>NUCLEOTIDE SEQUENCE [LARGE SCALE GENOMIC DNA]</scope>
    <source>
        <strain>Pei191</strain>
    </source>
</reference>
<comment type="function">
    <text evidence="1">Produces ATP from ADP in the presence of a proton gradient across the membrane. The gamma chain is believed to be important in regulating ATPase activity and the flow of protons through the CF(0) complex.</text>
</comment>
<comment type="subunit">
    <text evidence="1">F-type ATPases have 2 components, CF(1) - the catalytic core - and CF(0) - the membrane proton channel. CF(1) has five subunits: alpha(3), beta(3), gamma(1), delta(1), epsilon(1). CF(0) has three main subunits: a, b and c.</text>
</comment>
<comment type="subcellular location">
    <subcellularLocation>
        <location evidence="1">Cell inner membrane</location>
        <topology evidence="1">Peripheral membrane protein</topology>
    </subcellularLocation>
</comment>
<comment type="similarity">
    <text evidence="1">Belongs to the ATPase gamma chain family.</text>
</comment>
<accession>B2KEX2</accession>